<sequence>MATNRTFTMIKPDAVANGHIGNILAMITNGGFKIVSLKLTQLTVADAKAFYAVHAERPFYGELVEFMSRGPIVAAILEKDNAVEDFRTLIGATNPAEAAEGTIRKAYATSIGENAVHGSDSDENAAIESAFHFAGREQF</sequence>
<accession>A5F9Z6</accession>
<reference key="1">
    <citation type="journal article" date="2009" name="Appl. Environ. Microbiol.">
        <title>Novel features of the polysaccharide-digesting gliding bacterium Flavobacterium johnsoniae as revealed by genome sequence analysis.</title>
        <authorList>
            <person name="McBride M.J."/>
            <person name="Xie G."/>
            <person name="Martens E.C."/>
            <person name="Lapidus A."/>
            <person name="Henrissat B."/>
            <person name="Rhodes R.G."/>
            <person name="Goltsman E."/>
            <person name="Wang W."/>
            <person name="Xu J."/>
            <person name="Hunnicutt D.W."/>
            <person name="Staroscik A.M."/>
            <person name="Hoover T.R."/>
            <person name="Cheng Y.Q."/>
            <person name="Stein J.L."/>
        </authorList>
    </citation>
    <scope>NUCLEOTIDE SEQUENCE [LARGE SCALE GENOMIC DNA]</scope>
    <source>
        <strain>ATCC 17061 / DSM 2064 / JCM 8514 / BCRC 14874 / CCUG 350202 / NBRC 14942 / NCIMB 11054 / UW101</strain>
    </source>
</reference>
<feature type="chain" id="PRO_1000124967" description="Nucleoside diphosphate kinase">
    <location>
        <begin position="1"/>
        <end position="139"/>
    </location>
</feature>
<feature type="active site" description="Pros-phosphohistidine intermediate" evidence="1">
    <location>
        <position position="117"/>
    </location>
</feature>
<feature type="binding site" evidence="1">
    <location>
        <position position="11"/>
    </location>
    <ligand>
        <name>ATP</name>
        <dbReference type="ChEBI" id="CHEBI:30616"/>
    </ligand>
</feature>
<feature type="binding site" evidence="1">
    <location>
        <position position="59"/>
    </location>
    <ligand>
        <name>ATP</name>
        <dbReference type="ChEBI" id="CHEBI:30616"/>
    </ligand>
</feature>
<feature type="binding site" evidence="1">
    <location>
        <position position="87"/>
    </location>
    <ligand>
        <name>ATP</name>
        <dbReference type="ChEBI" id="CHEBI:30616"/>
    </ligand>
</feature>
<feature type="binding site" evidence="1">
    <location>
        <position position="93"/>
    </location>
    <ligand>
        <name>ATP</name>
        <dbReference type="ChEBI" id="CHEBI:30616"/>
    </ligand>
</feature>
<feature type="binding site" evidence="1">
    <location>
        <position position="104"/>
    </location>
    <ligand>
        <name>ATP</name>
        <dbReference type="ChEBI" id="CHEBI:30616"/>
    </ligand>
</feature>
<feature type="binding site" evidence="1">
    <location>
        <position position="114"/>
    </location>
    <ligand>
        <name>ATP</name>
        <dbReference type="ChEBI" id="CHEBI:30616"/>
    </ligand>
</feature>
<comment type="function">
    <text evidence="1">Major role in the synthesis of nucleoside triphosphates other than ATP. The ATP gamma phosphate is transferred to the NDP beta phosphate via a ping-pong mechanism, using a phosphorylated active-site intermediate.</text>
</comment>
<comment type="catalytic activity">
    <reaction evidence="1">
        <text>a 2'-deoxyribonucleoside 5'-diphosphate + ATP = a 2'-deoxyribonucleoside 5'-triphosphate + ADP</text>
        <dbReference type="Rhea" id="RHEA:44640"/>
        <dbReference type="ChEBI" id="CHEBI:30616"/>
        <dbReference type="ChEBI" id="CHEBI:61560"/>
        <dbReference type="ChEBI" id="CHEBI:73316"/>
        <dbReference type="ChEBI" id="CHEBI:456216"/>
        <dbReference type="EC" id="2.7.4.6"/>
    </reaction>
</comment>
<comment type="catalytic activity">
    <reaction evidence="1">
        <text>a ribonucleoside 5'-diphosphate + ATP = a ribonucleoside 5'-triphosphate + ADP</text>
        <dbReference type="Rhea" id="RHEA:18113"/>
        <dbReference type="ChEBI" id="CHEBI:30616"/>
        <dbReference type="ChEBI" id="CHEBI:57930"/>
        <dbReference type="ChEBI" id="CHEBI:61557"/>
        <dbReference type="ChEBI" id="CHEBI:456216"/>
        <dbReference type="EC" id="2.7.4.6"/>
    </reaction>
</comment>
<comment type="cofactor">
    <cofactor evidence="1">
        <name>Mg(2+)</name>
        <dbReference type="ChEBI" id="CHEBI:18420"/>
    </cofactor>
</comment>
<comment type="subunit">
    <text evidence="1">Homotetramer.</text>
</comment>
<comment type="subcellular location">
    <subcellularLocation>
        <location evidence="1">Cytoplasm</location>
    </subcellularLocation>
</comment>
<comment type="similarity">
    <text evidence="1">Belongs to the NDK family.</text>
</comment>
<protein>
    <recommendedName>
        <fullName evidence="1">Nucleoside diphosphate kinase</fullName>
        <shortName evidence="1">NDK</shortName>
        <shortName evidence="1">NDP kinase</shortName>
        <ecNumber evidence="1">2.7.4.6</ecNumber>
    </recommendedName>
    <alternativeName>
        <fullName evidence="1">Nucleoside-2-P kinase</fullName>
    </alternativeName>
</protein>
<proteinExistence type="inferred from homology"/>
<gene>
    <name evidence="1" type="primary">ndk</name>
    <name type="ordered locus">Fjoh_4976</name>
</gene>
<name>NDK_FLAJ1</name>
<evidence type="ECO:0000255" key="1">
    <source>
        <dbReference type="HAMAP-Rule" id="MF_00451"/>
    </source>
</evidence>
<organism>
    <name type="scientific">Flavobacterium johnsoniae (strain ATCC 17061 / DSM 2064 / JCM 8514 / BCRC 14874 / CCUG 350202 / NBRC 14942 / NCIMB 11054 / UW101)</name>
    <name type="common">Cytophaga johnsonae</name>
    <dbReference type="NCBI Taxonomy" id="376686"/>
    <lineage>
        <taxon>Bacteria</taxon>
        <taxon>Pseudomonadati</taxon>
        <taxon>Bacteroidota</taxon>
        <taxon>Flavobacteriia</taxon>
        <taxon>Flavobacteriales</taxon>
        <taxon>Flavobacteriaceae</taxon>
        <taxon>Flavobacterium</taxon>
    </lineage>
</organism>
<keyword id="KW-0067">ATP-binding</keyword>
<keyword id="KW-0963">Cytoplasm</keyword>
<keyword id="KW-0418">Kinase</keyword>
<keyword id="KW-0460">Magnesium</keyword>
<keyword id="KW-0479">Metal-binding</keyword>
<keyword id="KW-0546">Nucleotide metabolism</keyword>
<keyword id="KW-0547">Nucleotide-binding</keyword>
<keyword id="KW-0597">Phosphoprotein</keyword>
<keyword id="KW-0808">Transferase</keyword>
<dbReference type="EC" id="2.7.4.6" evidence="1"/>
<dbReference type="EMBL" id="CP000685">
    <property type="protein sequence ID" value="ABQ07975.1"/>
    <property type="molecule type" value="Genomic_DNA"/>
</dbReference>
<dbReference type="RefSeq" id="WP_012026941.1">
    <property type="nucleotide sequence ID" value="NZ_MUGZ01000004.1"/>
</dbReference>
<dbReference type="SMR" id="A5F9Z6"/>
<dbReference type="STRING" id="376686.Fjoh_4976"/>
<dbReference type="KEGG" id="fjo:Fjoh_4976"/>
<dbReference type="eggNOG" id="COG0105">
    <property type="taxonomic scope" value="Bacteria"/>
</dbReference>
<dbReference type="HOGENOM" id="CLU_060216_8_1_10"/>
<dbReference type="OrthoDB" id="9801161at2"/>
<dbReference type="Proteomes" id="UP000006694">
    <property type="component" value="Chromosome"/>
</dbReference>
<dbReference type="GO" id="GO:0005737">
    <property type="term" value="C:cytoplasm"/>
    <property type="evidence" value="ECO:0007669"/>
    <property type="project" value="UniProtKB-SubCell"/>
</dbReference>
<dbReference type="GO" id="GO:0005524">
    <property type="term" value="F:ATP binding"/>
    <property type="evidence" value="ECO:0007669"/>
    <property type="project" value="UniProtKB-UniRule"/>
</dbReference>
<dbReference type="GO" id="GO:0046872">
    <property type="term" value="F:metal ion binding"/>
    <property type="evidence" value="ECO:0007669"/>
    <property type="project" value="UniProtKB-KW"/>
</dbReference>
<dbReference type="GO" id="GO:0004550">
    <property type="term" value="F:nucleoside diphosphate kinase activity"/>
    <property type="evidence" value="ECO:0007669"/>
    <property type="project" value="UniProtKB-UniRule"/>
</dbReference>
<dbReference type="GO" id="GO:0006241">
    <property type="term" value="P:CTP biosynthetic process"/>
    <property type="evidence" value="ECO:0007669"/>
    <property type="project" value="UniProtKB-UniRule"/>
</dbReference>
<dbReference type="GO" id="GO:0006183">
    <property type="term" value="P:GTP biosynthetic process"/>
    <property type="evidence" value="ECO:0007669"/>
    <property type="project" value="UniProtKB-UniRule"/>
</dbReference>
<dbReference type="GO" id="GO:0006228">
    <property type="term" value="P:UTP biosynthetic process"/>
    <property type="evidence" value="ECO:0007669"/>
    <property type="project" value="UniProtKB-UniRule"/>
</dbReference>
<dbReference type="CDD" id="cd04413">
    <property type="entry name" value="NDPk_I"/>
    <property type="match status" value="1"/>
</dbReference>
<dbReference type="FunFam" id="3.30.70.141:FF:000017">
    <property type="entry name" value="Nucleoside diphosphate kinase"/>
    <property type="match status" value="1"/>
</dbReference>
<dbReference type="Gene3D" id="3.30.70.141">
    <property type="entry name" value="Nucleoside diphosphate kinase-like domain"/>
    <property type="match status" value="1"/>
</dbReference>
<dbReference type="HAMAP" id="MF_00451">
    <property type="entry name" value="NDP_kinase"/>
    <property type="match status" value="1"/>
</dbReference>
<dbReference type="InterPro" id="IPR034907">
    <property type="entry name" value="NDK-like_dom"/>
</dbReference>
<dbReference type="InterPro" id="IPR036850">
    <property type="entry name" value="NDK-like_dom_sf"/>
</dbReference>
<dbReference type="InterPro" id="IPR001564">
    <property type="entry name" value="Nucleoside_diP_kinase"/>
</dbReference>
<dbReference type="NCBIfam" id="NF001908">
    <property type="entry name" value="PRK00668.1"/>
    <property type="match status" value="1"/>
</dbReference>
<dbReference type="NCBIfam" id="NF011116">
    <property type="entry name" value="PRK14545.1"/>
    <property type="match status" value="1"/>
</dbReference>
<dbReference type="PANTHER" id="PTHR46161">
    <property type="entry name" value="NUCLEOSIDE DIPHOSPHATE KINASE"/>
    <property type="match status" value="1"/>
</dbReference>
<dbReference type="PANTHER" id="PTHR46161:SF3">
    <property type="entry name" value="NUCLEOSIDE DIPHOSPHATE KINASE DDB_G0292928-RELATED"/>
    <property type="match status" value="1"/>
</dbReference>
<dbReference type="Pfam" id="PF00334">
    <property type="entry name" value="NDK"/>
    <property type="match status" value="1"/>
</dbReference>
<dbReference type="PRINTS" id="PR01243">
    <property type="entry name" value="NUCDPKINASE"/>
</dbReference>
<dbReference type="SMART" id="SM00562">
    <property type="entry name" value="NDK"/>
    <property type="match status" value="1"/>
</dbReference>
<dbReference type="SUPFAM" id="SSF54919">
    <property type="entry name" value="Nucleoside diphosphate kinase, NDK"/>
    <property type="match status" value="1"/>
</dbReference>
<dbReference type="PROSITE" id="PS51374">
    <property type="entry name" value="NDPK_LIKE"/>
    <property type="match status" value="1"/>
</dbReference>